<accession>Q54M75</accession>
<protein>
    <recommendedName>
        <fullName>Uncharacterized transmembrane protein DDB_G0286141</fullName>
    </recommendedName>
</protein>
<name>Y6832_DICDI</name>
<dbReference type="EMBL" id="AAFI02000085">
    <property type="protein sequence ID" value="EAL64363.1"/>
    <property type="molecule type" value="Genomic_DNA"/>
</dbReference>
<dbReference type="RefSeq" id="XP_637873.1">
    <property type="nucleotide sequence ID" value="XM_632781.1"/>
</dbReference>
<dbReference type="GlyGen" id="Q54M75">
    <property type="glycosylation" value="1 site"/>
</dbReference>
<dbReference type="PaxDb" id="44689-DDB0186832"/>
<dbReference type="EnsemblProtists" id="EAL64363">
    <property type="protein sequence ID" value="EAL64363"/>
    <property type="gene ID" value="DDB_G0286141"/>
</dbReference>
<dbReference type="GeneID" id="8625470"/>
<dbReference type="KEGG" id="ddi:DDB_G0286141"/>
<dbReference type="dictyBase" id="DDB_G0286141"/>
<dbReference type="VEuPathDB" id="AmoebaDB:DDB_G0286141"/>
<dbReference type="HOGENOM" id="CLU_2364048_0_0_1"/>
<dbReference type="InParanoid" id="Q54M75"/>
<dbReference type="OMA" id="FCAVFYA"/>
<dbReference type="PRO" id="PR:Q54M75"/>
<dbReference type="Proteomes" id="UP000002195">
    <property type="component" value="Chromosome 4"/>
</dbReference>
<dbReference type="GO" id="GO:0016020">
    <property type="term" value="C:membrane"/>
    <property type="evidence" value="ECO:0007669"/>
    <property type="project" value="UniProtKB-SubCell"/>
</dbReference>
<gene>
    <name type="ORF">DDB_G0286141</name>
</gene>
<feature type="signal peptide" evidence="1">
    <location>
        <begin position="1"/>
        <end position="30"/>
    </location>
</feature>
<feature type="chain" id="PRO_0000348501" description="Uncharacterized transmembrane protein DDB_G0286141">
    <location>
        <begin position="31"/>
        <end position="96"/>
    </location>
</feature>
<feature type="topological domain" description="Extracellular" evidence="1">
    <location>
        <begin position="31"/>
        <end position="54"/>
    </location>
</feature>
<feature type="transmembrane region" description="Helical" evidence="1">
    <location>
        <begin position="55"/>
        <end position="75"/>
    </location>
</feature>
<feature type="topological domain" description="Cytoplasmic" evidence="1">
    <location>
        <begin position="76"/>
        <end position="96"/>
    </location>
</feature>
<evidence type="ECO:0000255" key="1"/>
<sequence>MLILSVFCAVFYAFLTAIVANFSLKTLAIGATFVKSHLKSNPIPYGDLVADSLDFGNITPTVTLLFAILIAVLALKCEFSCSTSAPAGQASGRKVK</sequence>
<organism>
    <name type="scientific">Dictyostelium discoideum</name>
    <name type="common">Social amoeba</name>
    <dbReference type="NCBI Taxonomy" id="44689"/>
    <lineage>
        <taxon>Eukaryota</taxon>
        <taxon>Amoebozoa</taxon>
        <taxon>Evosea</taxon>
        <taxon>Eumycetozoa</taxon>
        <taxon>Dictyostelia</taxon>
        <taxon>Dictyosteliales</taxon>
        <taxon>Dictyosteliaceae</taxon>
        <taxon>Dictyostelium</taxon>
    </lineage>
</organism>
<reference key="1">
    <citation type="journal article" date="2005" name="Nature">
        <title>The genome of the social amoeba Dictyostelium discoideum.</title>
        <authorList>
            <person name="Eichinger L."/>
            <person name="Pachebat J.A."/>
            <person name="Gloeckner G."/>
            <person name="Rajandream M.A."/>
            <person name="Sucgang R."/>
            <person name="Berriman M."/>
            <person name="Song J."/>
            <person name="Olsen R."/>
            <person name="Szafranski K."/>
            <person name="Xu Q."/>
            <person name="Tunggal B."/>
            <person name="Kummerfeld S."/>
            <person name="Madera M."/>
            <person name="Konfortov B.A."/>
            <person name="Rivero F."/>
            <person name="Bankier A.T."/>
            <person name="Lehmann R."/>
            <person name="Hamlin N."/>
            <person name="Davies R."/>
            <person name="Gaudet P."/>
            <person name="Fey P."/>
            <person name="Pilcher K."/>
            <person name="Chen G."/>
            <person name="Saunders D."/>
            <person name="Sodergren E.J."/>
            <person name="Davis P."/>
            <person name="Kerhornou A."/>
            <person name="Nie X."/>
            <person name="Hall N."/>
            <person name="Anjard C."/>
            <person name="Hemphill L."/>
            <person name="Bason N."/>
            <person name="Farbrother P."/>
            <person name="Desany B."/>
            <person name="Just E."/>
            <person name="Morio T."/>
            <person name="Rost R."/>
            <person name="Churcher C.M."/>
            <person name="Cooper J."/>
            <person name="Haydock S."/>
            <person name="van Driessche N."/>
            <person name="Cronin A."/>
            <person name="Goodhead I."/>
            <person name="Muzny D.M."/>
            <person name="Mourier T."/>
            <person name="Pain A."/>
            <person name="Lu M."/>
            <person name="Harper D."/>
            <person name="Lindsay R."/>
            <person name="Hauser H."/>
            <person name="James K.D."/>
            <person name="Quiles M."/>
            <person name="Madan Babu M."/>
            <person name="Saito T."/>
            <person name="Buchrieser C."/>
            <person name="Wardroper A."/>
            <person name="Felder M."/>
            <person name="Thangavelu M."/>
            <person name="Johnson D."/>
            <person name="Knights A."/>
            <person name="Loulseged H."/>
            <person name="Mungall K.L."/>
            <person name="Oliver K."/>
            <person name="Price C."/>
            <person name="Quail M.A."/>
            <person name="Urushihara H."/>
            <person name="Hernandez J."/>
            <person name="Rabbinowitsch E."/>
            <person name="Steffen D."/>
            <person name="Sanders M."/>
            <person name="Ma J."/>
            <person name="Kohara Y."/>
            <person name="Sharp S."/>
            <person name="Simmonds M.N."/>
            <person name="Spiegler S."/>
            <person name="Tivey A."/>
            <person name="Sugano S."/>
            <person name="White B."/>
            <person name="Walker D."/>
            <person name="Woodward J.R."/>
            <person name="Winckler T."/>
            <person name="Tanaka Y."/>
            <person name="Shaulsky G."/>
            <person name="Schleicher M."/>
            <person name="Weinstock G.M."/>
            <person name="Rosenthal A."/>
            <person name="Cox E.C."/>
            <person name="Chisholm R.L."/>
            <person name="Gibbs R.A."/>
            <person name="Loomis W.F."/>
            <person name="Platzer M."/>
            <person name="Kay R.R."/>
            <person name="Williams J.G."/>
            <person name="Dear P.H."/>
            <person name="Noegel A.A."/>
            <person name="Barrell B.G."/>
            <person name="Kuspa A."/>
        </authorList>
    </citation>
    <scope>NUCLEOTIDE SEQUENCE [LARGE SCALE GENOMIC DNA]</scope>
    <source>
        <strain>AX4</strain>
    </source>
</reference>
<comment type="subcellular location">
    <subcellularLocation>
        <location>Membrane</location>
        <topology>Single-pass type I membrane protein</topology>
    </subcellularLocation>
</comment>
<keyword id="KW-0472">Membrane</keyword>
<keyword id="KW-1185">Reference proteome</keyword>
<keyword id="KW-0732">Signal</keyword>
<keyword id="KW-0812">Transmembrane</keyword>
<keyword id="KW-1133">Transmembrane helix</keyword>
<proteinExistence type="inferred from homology"/>